<name>RSMG_HISS2</name>
<organism>
    <name type="scientific">Histophilus somni (strain 2336)</name>
    <name type="common">Haemophilus somnus</name>
    <dbReference type="NCBI Taxonomy" id="228400"/>
    <lineage>
        <taxon>Bacteria</taxon>
        <taxon>Pseudomonadati</taxon>
        <taxon>Pseudomonadota</taxon>
        <taxon>Gammaproteobacteria</taxon>
        <taxon>Pasteurellales</taxon>
        <taxon>Pasteurellaceae</taxon>
        <taxon>Histophilus</taxon>
    </lineage>
</organism>
<evidence type="ECO:0000255" key="1">
    <source>
        <dbReference type="HAMAP-Rule" id="MF_00074"/>
    </source>
</evidence>
<evidence type="ECO:0000305" key="2"/>
<sequence>MEKLNFLLKNTALLPTNLQKERLVQLVLLLNKWNKAYNLTSVRDPMEMLVKHILDSIVVSPYLQGNIFIDVGTGPGLPGLPLAIINPDKKFFLLDSLGKRISFIRNAVRELELTNVEPVLSRVEEFKPDHQFDGVLSRAFASLKDMTEWCQHLLTDQGFFYALKGQYNMEEVSALSAQFSVDKIIELNVPELVGKRHLVLLKKIRINLMNYL</sequence>
<proteinExistence type="inferred from homology"/>
<comment type="function">
    <text evidence="1">Specifically methylates the N7 position of guanine in position 527 of 16S rRNA.</text>
</comment>
<comment type="catalytic activity">
    <reaction evidence="1">
        <text>guanosine(527) in 16S rRNA + S-adenosyl-L-methionine = N(7)-methylguanosine(527) in 16S rRNA + S-adenosyl-L-homocysteine</text>
        <dbReference type="Rhea" id="RHEA:42732"/>
        <dbReference type="Rhea" id="RHEA-COMP:10209"/>
        <dbReference type="Rhea" id="RHEA-COMP:10210"/>
        <dbReference type="ChEBI" id="CHEBI:57856"/>
        <dbReference type="ChEBI" id="CHEBI:59789"/>
        <dbReference type="ChEBI" id="CHEBI:74269"/>
        <dbReference type="ChEBI" id="CHEBI:74480"/>
        <dbReference type="EC" id="2.1.1.170"/>
    </reaction>
</comment>
<comment type="subcellular location">
    <subcellularLocation>
        <location evidence="1">Cytoplasm</location>
    </subcellularLocation>
</comment>
<comment type="similarity">
    <text evidence="1">Belongs to the methyltransferase superfamily. RNA methyltransferase RsmG family.</text>
</comment>
<comment type="sequence caution" evidence="2">
    <conflict type="erroneous initiation">
        <sequence resource="EMBL-CDS" id="ACA31646"/>
    </conflict>
</comment>
<dbReference type="EC" id="2.1.1.170" evidence="1"/>
<dbReference type="EMBL" id="CP000947">
    <property type="protein sequence ID" value="ACA31646.1"/>
    <property type="status" value="ALT_INIT"/>
    <property type="molecule type" value="Genomic_DNA"/>
</dbReference>
<dbReference type="RefSeq" id="WP_012340947.1">
    <property type="nucleotide sequence ID" value="NC_010519.1"/>
</dbReference>
<dbReference type="SMR" id="B0UWH2"/>
<dbReference type="STRING" id="228400.HSM_1857"/>
<dbReference type="GeneID" id="31488165"/>
<dbReference type="KEGG" id="hsm:HSM_1857"/>
<dbReference type="HOGENOM" id="CLU_065341_2_0_6"/>
<dbReference type="GO" id="GO:0005829">
    <property type="term" value="C:cytosol"/>
    <property type="evidence" value="ECO:0007669"/>
    <property type="project" value="TreeGrafter"/>
</dbReference>
<dbReference type="GO" id="GO:0070043">
    <property type="term" value="F:rRNA (guanine-N7-)-methyltransferase activity"/>
    <property type="evidence" value="ECO:0007669"/>
    <property type="project" value="UniProtKB-UniRule"/>
</dbReference>
<dbReference type="CDD" id="cd02440">
    <property type="entry name" value="AdoMet_MTases"/>
    <property type="match status" value="1"/>
</dbReference>
<dbReference type="Gene3D" id="3.40.50.150">
    <property type="entry name" value="Vaccinia Virus protein VP39"/>
    <property type="match status" value="1"/>
</dbReference>
<dbReference type="HAMAP" id="MF_00074">
    <property type="entry name" value="16SrRNA_methyltr_G"/>
    <property type="match status" value="1"/>
</dbReference>
<dbReference type="InterPro" id="IPR003682">
    <property type="entry name" value="rRNA_ssu_MeTfrase_G"/>
</dbReference>
<dbReference type="InterPro" id="IPR029063">
    <property type="entry name" value="SAM-dependent_MTases_sf"/>
</dbReference>
<dbReference type="NCBIfam" id="TIGR00138">
    <property type="entry name" value="rsmG_gidB"/>
    <property type="match status" value="1"/>
</dbReference>
<dbReference type="PANTHER" id="PTHR31760">
    <property type="entry name" value="S-ADENOSYL-L-METHIONINE-DEPENDENT METHYLTRANSFERASES SUPERFAMILY PROTEIN"/>
    <property type="match status" value="1"/>
</dbReference>
<dbReference type="PANTHER" id="PTHR31760:SF0">
    <property type="entry name" value="S-ADENOSYL-L-METHIONINE-DEPENDENT METHYLTRANSFERASES SUPERFAMILY PROTEIN"/>
    <property type="match status" value="1"/>
</dbReference>
<dbReference type="Pfam" id="PF02527">
    <property type="entry name" value="GidB"/>
    <property type="match status" value="1"/>
</dbReference>
<dbReference type="PIRSF" id="PIRSF003078">
    <property type="entry name" value="GidB"/>
    <property type="match status" value="1"/>
</dbReference>
<dbReference type="SUPFAM" id="SSF53335">
    <property type="entry name" value="S-adenosyl-L-methionine-dependent methyltransferases"/>
    <property type="match status" value="1"/>
</dbReference>
<feature type="chain" id="PRO_0000335359" description="Ribosomal RNA small subunit methyltransferase G">
    <location>
        <begin position="1"/>
        <end position="212"/>
    </location>
</feature>
<feature type="binding site" evidence="1">
    <location>
        <position position="72"/>
    </location>
    <ligand>
        <name>S-adenosyl-L-methionine</name>
        <dbReference type="ChEBI" id="CHEBI:59789"/>
    </ligand>
</feature>
<feature type="binding site" evidence="1">
    <location>
        <position position="77"/>
    </location>
    <ligand>
        <name>S-adenosyl-L-methionine</name>
        <dbReference type="ChEBI" id="CHEBI:59789"/>
    </ligand>
</feature>
<feature type="binding site" evidence="1">
    <location>
        <begin position="123"/>
        <end position="124"/>
    </location>
    <ligand>
        <name>S-adenosyl-L-methionine</name>
        <dbReference type="ChEBI" id="CHEBI:59789"/>
    </ligand>
</feature>
<feature type="binding site" evidence="1">
    <location>
        <position position="138"/>
    </location>
    <ligand>
        <name>S-adenosyl-L-methionine</name>
        <dbReference type="ChEBI" id="CHEBI:59789"/>
    </ligand>
</feature>
<protein>
    <recommendedName>
        <fullName evidence="1">Ribosomal RNA small subunit methyltransferase G</fullName>
        <ecNumber evidence="1">2.1.1.170</ecNumber>
    </recommendedName>
    <alternativeName>
        <fullName evidence="1">16S rRNA 7-methylguanosine methyltransferase</fullName>
        <shortName evidence="1">16S rRNA m7G methyltransferase</shortName>
    </alternativeName>
</protein>
<reference key="1">
    <citation type="submission" date="2008-02" db="EMBL/GenBank/DDBJ databases">
        <title>Complete sequence of Haemophilus somnus 2336.</title>
        <authorList>
            <consortium name="US DOE Joint Genome Institute"/>
            <person name="Siddaramappa S."/>
            <person name="Duncan A.J."/>
            <person name="Challacombe J.F."/>
            <person name="Rainey D."/>
            <person name="Gillaspy A.F."/>
            <person name="Carson M."/>
            <person name="Gipson J."/>
            <person name="Gipson M."/>
            <person name="Bruce D."/>
            <person name="Detter J.C."/>
            <person name="Han C.S."/>
            <person name="Land M."/>
            <person name="Tapia R."/>
            <person name="Thompson L.S."/>
            <person name="Orvis J."/>
            <person name="Zaitshik J."/>
            <person name="Barnes G."/>
            <person name="Brettin T.S."/>
            <person name="Dyer D.W."/>
            <person name="Inzana T.J."/>
        </authorList>
    </citation>
    <scope>NUCLEOTIDE SEQUENCE [LARGE SCALE GENOMIC DNA]</scope>
    <source>
        <strain>2336</strain>
    </source>
</reference>
<gene>
    <name evidence="1" type="primary">rsmG</name>
    <name type="ordered locus">HSM_1857</name>
</gene>
<accession>B0UWH2</accession>
<keyword id="KW-0963">Cytoplasm</keyword>
<keyword id="KW-0489">Methyltransferase</keyword>
<keyword id="KW-0698">rRNA processing</keyword>
<keyword id="KW-0949">S-adenosyl-L-methionine</keyword>
<keyword id="KW-0808">Transferase</keyword>